<evidence type="ECO:0000256" key="1">
    <source>
        <dbReference type="SAM" id="MobiDB-lite"/>
    </source>
</evidence>
<evidence type="ECO:0000305" key="2"/>
<protein>
    <recommendedName>
        <fullName>Putative movement protein</fullName>
    </recommendedName>
    <alternativeName>
        <fullName>Cell-to-cell transport protein</fullName>
    </alternativeName>
</protein>
<name>MVP_OUMVV</name>
<comment type="function">
    <text evidence="2">Transports viral genome to neighboring plant cells directly through plasmosdesmata, without any budding. The movement protein allows efficient cell to cell propagation, by bypassing the host cell wall barrier (Potential).</text>
</comment>
<reference key="1">
    <citation type="journal article" date="2009" name="J. Gen. Virol.">
        <title>Molecular characterization of the plant virus genus Ourmiavirus and evidence of inter-kingdom reassortment of viral genome segments as its possible route of origin.</title>
        <authorList>
            <person name="Rastgou M."/>
            <person name="Habibi M.K."/>
            <person name="Izadpanah K."/>
            <person name="Masenga V."/>
            <person name="Milne R.G."/>
            <person name="Wolf Y.I."/>
            <person name="Koonin E.V."/>
            <person name="Turina M."/>
        </authorList>
    </citation>
    <scope>NUCLEOTIDE SEQUENCE [GENOMIC RNA]</scope>
</reference>
<organismHost>
    <name type="scientific">Cucumis melo</name>
    <name type="common">Muskmelon</name>
    <dbReference type="NCBI Taxonomy" id="3656"/>
</organismHost>
<dbReference type="EMBL" id="EU770624">
    <property type="protein sequence ID" value="ACF16361.1"/>
    <property type="molecule type" value="mRNA"/>
</dbReference>
<dbReference type="RefSeq" id="YP_002019758.1">
    <property type="nucleotide sequence ID" value="NC_011069.1"/>
</dbReference>
<dbReference type="GeneID" id="8658758"/>
<dbReference type="KEGG" id="vg:8658758"/>
<dbReference type="Proteomes" id="UP000001103">
    <property type="component" value="Genome"/>
</dbReference>
<dbReference type="GO" id="GO:0046740">
    <property type="term" value="P:transport of virus in host, cell to cell"/>
    <property type="evidence" value="ECO:0007669"/>
    <property type="project" value="UniProtKB-KW"/>
</dbReference>
<keyword id="KW-1185">Reference proteome</keyword>
<keyword id="KW-0813">Transport</keyword>
<keyword id="KW-0916">Viral movement protein</keyword>
<accession>B3VML2</accession>
<proteinExistence type="evidence at transcript level"/>
<feature type="chain" id="PRO_0000402475" description="Putative movement protein">
    <location>
        <begin position="1"/>
        <end position="288"/>
    </location>
</feature>
<feature type="region of interest" description="Disordered" evidence="1">
    <location>
        <begin position="207"/>
        <end position="288"/>
    </location>
</feature>
<sequence length="288" mass="31612">MGDNALDLATASSTPIPMPNTGQLVISPQDIGYSDPPKLRGRLKLEFVHDISLDANVEDPIALIPHGIWSIFKSKLAQMRCPKGYITYDKVILSWKPHVATGLARGQIAVVDTRVNHTSIEDLMHKALWKTAPVDLGCTYTIQGTVPYCLPFHPKEGGDVKSDLESQNPIRGIVYITDSRYQEAARHGALTMTLKLSIGTMPTDALTGPRATLSQPHLRDNLRSRSQRISRPPIGITQRPRRSLAEPPLEKEEEQESTLSSEASGSEQGLIIPVQGPSTSSRSRRVRG</sequence>
<organism>
    <name type="scientific">Ourmia melon virus (isolate Melon/Iran/VE9)</name>
    <name type="common">OuMV</name>
    <dbReference type="NCBI Taxonomy" id="652838"/>
    <lineage>
        <taxon>Viruses</taxon>
        <taxon>Riboviria</taxon>
        <taxon>Orthornavirae</taxon>
        <taxon>Lenarviricota</taxon>
        <taxon>Miaviricetes</taxon>
        <taxon>Ourlivirales</taxon>
        <taxon>Botourmiaviridae</taxon>
        <taxon>Ourmiavirus</taxon>
        <taxon>Ourmia melon virus</taxon>
    </lineage>
</organism>